<geneLocation type="chloroplast"/>
<comment type="function">
    <text evidence="1">F(1)F(0) ATP synthase produces ATP from ADP in the presence of a proton or sodium gradient. F-type ATPases consist of two structural domains, F(1) containing the extramembraneous catalytic core and F(0) containing the membrane proton channel, linked together by a central stalk and a peripheral stalk. During catalysis, ATP synthesis in the catalytic domain of F(1) is coupled via a rotary mechanism of the central stalk subunits to proton translocation.</text>
</comment>
<comment type="function">
    <text evidence="1">Key component of the F(0) channel; it plays a direct role in translocation across the membrane. A homomeric c-ring of between 10-14 subunits forms the central stalk rotor element with the F(1) delta and epsilon subunits.</text>
</comment>
<comment type="subunit">
    <text evidence="1">F-type ATPases have 2 components, F(1) - the catalytic core - and F(0) - the membrane proton channel. F(1) has five subunits: alpha(3), beta(3), gamma(1), delta(1), epsilon(1). F(0) has four main subunits: a(1), b(1), b'(1) and c(10-14). The alpha and beta chains form an alternating ring which encloses part of the gamma chain. F(1) is attached to F(0) by a central stalk formed by the gamma and epsilon chains, while a peripheral stalk is formed by the delta, b and b' chains.</text>
</comment>
<comment type="subcellular location">
    <subcellularLocation>
        <location evidence="1">Plastid</location>
        <location evidence="1">Chloroplast thylakoid membrane</location>
        <topology evidence="1">Multi-pass membrane protein</topology>
    </subcellularLocation>
</comment>
<comment type="miscellaneous">
    <text>In plastids the F-type ATPase is also known as CF(1)CF(0).</text>
</comment>
<comment type="similarity">
    <text evidence="1">Belongs to the ATPase C chain family.</text>
</comment>
<sequence>MNPIVSAASVVASGLSVGLAAIGPGIGQGTAAAQAVEGIARQPEAEGRIRGTLLLSLAFMESLTIYGLVVALALLFANPFTS</sequence>
<reference key="1">
    <citation type="journal article" date="1999" name="J. Phycol.">
        <title>The atpA gene cluster of a cryptomonad, Guillardia theta: a piece in the puzzle of chloroplast genome development.</title>
        <authorList>
            <person name="Leitsch C.E.W."/>
            <person name="Kowallik K.V."/>
            <person name="Douglas S.E."/>
        </authorList>
    </citation>
    <scope>NUCLEOTIDE SEQUENCE [GENOMIC DNA]</scope>
</reference>
<reference key="2">
    <citation type="journal article" date="1999" name="J. Mol. Evol.">
        <title>The plastid genome of the cryptophyte alga, Guillardia theta: complete sequence and conserved synteny groups confirm its common ancestry with red algae.</title>
        <authorList>
            <person name="Douglas S.E."/>
            <person name="Penny S.L."/>
        </authorList>
    </citation>
    <scope>NUCLEOTIDE SEQUENCE [LARGE SCALE GENOMIC DNA]</scope>
</reference>
<keyword id="KW-0066">ATP synthesis</keyword>
<keyword id="KW-0138">CF(0)</keyword>
<keyword id="KW-0150">Chloroplast</keyword>
<keyword id="KW-0375">Hydrogen ion transport</keyword>
<keyword id="KW-0406">Ion transport</keyword>
<keyword id="KW-0446">Lipid-binding</keyword>
<keyword id="KW-0472">Membrane</keyword>
<keyword id="KW-0934">Plastid</keyword>
<keyword id="KW-0793">Thylakoid</keyword>
<keyword id="KW-0812">Transmembrane</keyword>
<keyword id="KW-1133">Transmembrane helix</keyword>
<keyword id="KW-0813">Transport</keyword>
<protein>
    <recommendedName>
        <fullName evidence="1">ATP synthase subunit c, chloroplastic</fullName>
    </recommendedName>
    <alternativeName>
        <fullName evidence="1">ATP synthase F(0) sector subunit c</fullName>
    </alternativeName>
    <alternativeName>
        <fullName evidence="1">ATPase subunit III</fullName>
    </alternativeName>
    <alternativeName>
        <fullName evidence="1">F-type ATPase subunit c</fullName>
        <shortName evidence="1">F-ATPase subunit c</shortName>
    </alternativeName>
    <alternativeName>
        <fullName evidence="1">Lipid-binding protein</fullName>
    </alternativeName>
</protein>
<accession>O78479</accession>
<dbReference type="EMBL" id="AF041468">
    <property type="protein sequence ID" value="AAC35670.1"/>
    <property type="molecule type" value="Genomic_DNA"/>
</dbReference>
<dbReference type="RefSeq" id="NP_050736.1">
    <property type="nucleotide sequence ID" value="NC_000926.1"/>
</dbReference>
<dbReference type="SMR" id="O78479"/>
<dbReference type="GeneID" id="857041"/>
<dbReference type="HOGENOM" id="CLU_148047_2_0_1"/>
<dbReference type="OMA" id="QPELMNE"/>
<dbReference type="GO" id="GO:0009535">
    <property type="term" value="C:chloroplast thylakoid membrane"/>
    <property type="evidence" value="ECO:0007669"/>
    <property type="project" value="UniProtKB-SubCell"/>
</dbReference>
<dbReference type="GO" id="GO:0045259">
    <property type="term" value="C:proton-transporting ATP synthase complex"/>
    <property type="evidence" value="ECO:0007669"/>
    <property type="project" value="UniProtKB-KW"/>
</dbReference>
<dbReference type="GO" id="GO:0033177">
    <property type="term" value="C:proton-transporting two-sector ATPase complex, proton-transporting domain"/>
    <property type="evidence" value="ECO:0007669"/>
    <property type="project" value="InterPro"/>
</dbReference>
<dbReference type="GO" id="GO:0008289">
    <property type="term" value="F:lipid binding"/>
    <property type="evidence" value="ECO:0007669"/>
    <property type="project" value="UniProtKB-KW"/>
</dbReference>
<dbReference type="GO" id="GO:0046933">
    <property type="term" value="F:proton-transporting ATP synthase activity, rotational mechanism"/>
    <property type="evidence" value="ECO:0007669"/>
    <property type="project" value="UniProtKB-UniRule"/>
</dbReference>
<dbReference type="CDD" id="cd18183">
    <property type="entry name" value="ATP-synt_Fo_c_ATPH"/>
    <property type="match status" value="1"/>
</dbReference>
<dbReference type="FunFam" id="1.20.20.10:FF:000001">
    <property type="entry name" value="ATP synthase subunit c, chloroplastic"/>
    <property type="match status" value="1"/>
</dbReference>
<dbReference type="Gene3D" id="1.20.20.10">
    <property type="entry name" value="F1F0 ATP synthase subunit C"/>
    <property type="match status" value="1"/>
</dbReference>
<dbReference type="HAMAP" id="MF_01396">
    <property type="entry name" value="ATP_synth_c_bact"/>
    <property type="match status" value="1"/>
</dbReference>
<dbReference type="InterPro" id="IPR005953">
    <property type="entry name" value="ATP_synth_csu_bac/chlpt"/>
</dbReference>
<dbReference type="InterPro" id="IPR000454">
    <property type="entry name" value="ATP_synth_F0_csu"/>
</dbReference>
<dbReference type="InterPro" id="IPR020537">
    <property type="entry name" value="ATP_synth_F0_csu_DDCD_BS"/>
</dbReference>
<dbReference type="InterPro" id="IPR038662">
    <property type="entry name" value="ATP_synth_F0_csu_sf"/>
</dbReference>
<dbReference type="InterPro" id="IPR002379">
    <property type="entry name" value="ATPase_proteolipid_c-like_dom"/>
</dbReference>
<dbReference type="InterPro" id="IPR035921">
    <property type="entry name" value="F/V-ATP_Csub_sf"/>
</dbReference>
<dbReference type="NCBIfam" id="TIGR01260">
    <property type="entry name" value="ATP_synt_c"/>
    <property type="match status" value="1"/>
</dbReference>
<dbReference type="NCBIfam" id="NF005608">
    <property type="entry name" value="PRK07354.1"/>
    <property type="match status" value="1"/>
</dbReference>
<dbReference type="PANTHER" id="PTHR10031">
    <property type="entry name" value="ATP SYNTHASE LIPID-BINDING PROTEIN, MITOCHONDRIAL"/>
    <property type="match status" value="1"/>
</dbReference>
<dbReference type="PANTHER" id="PTHR10031:SF0">
    <property type="entry name" value="ATPASE PROTEIN 9"/>
    <property type="match status" value="1"/>
</dbReference>
<dbReference type="Pfam" id="PF00137">
    <property type="entry name" value="ATP-synt_C"/>
    <property type="match status" value="1"/>
</dbReference>
<dbReference type="PRINTS" id="PR00124">
    <property type="entry name" value="ATPASEC"/>
</dbReference>
<dbReference type="SUPFAM" id="SSF81333">
    <property type="entry name" value="F1F0 ATP synthase subunit C"/>
    <property type="match status" value="1"/>
</dbReference>
<dbReference type="PROSITE" id="PS00605">
    <property type="entry name" value="ATPASE_C"/>
    <property type="match status" value="1"/>
</dbReference>
<gene>
    <name evidence="1" type="primary">atpH</name>
</gene>
<name>ATPH_GUITH</name>
<organism>
    <name type="scientific">Guillardia theta</name>
    <name type="common">Cryptophyte</name>
    <name type="synonym">Cryptomonas phi</name>
    <dbReference type="NCBI Taxonomy" id="55529"/>
    <lineage>
        <taxon>Eukaryota</taxon>
        <taxon>Cryptophyceae</taxon>
        <taxon>Pyrenomonadales</taxon>
        <taxon>Geminigeraceae</taxon>
        <taxon>Guillardia</taxon>
    </lineage>
</organism>
<proteinExistence type="inferred from homology"/>
<evidence type="ECO:0000255" key="1">
    <source>
        <dbReference type="HAMAP-Rule" id="MF_01396"/>
    </source>
</evidence>
<feature type="chain" id="PRO_0000112189" description="ATP synthase subunit c, chloroplastic">
    <location>
        <begin position="1"/>
        <end position="82"/>
    </location>
</feature>
<feature type="transmembrane region" description="Helical" evidence="1">
    <location>
        <begin position="7"/>
        <end position="27"/>
    </location>
</feature>
<feature type="transmembrane region" description="Helical" evidence="1">
    <location>
        <begin position="57"/>
        <end position="77"/>
    </location>
</feature>
<feature type="site" description="Reversibly protonated during proton transport" evidence="1">
    <location>
        <position position="61"/>
    </location>
</feature>